<keyword id="KW-0963">Cytoplasm</keyword>
<keyword id="KW-0312">Gluconeogenesis</keyword>
<keyword id="KW-0324">Glycolysis</keyword>
<keyword id="KW-0413">Isomerase</keyword>
<feature type="chain" id="PRO_0000090230" description="Triosephosphate isomerase">
    <location>
        <begin position="1"/>
        <end position="255"/>
    </location>
</feature>
<feature type="active site" description="Electrophile" evidence="1">
    <location>
        <position position="95"/>
    </location>
</feature>
<feature type="active site" description="Proton acceptor" evidence="1">
    <location>
        <position position="167"/>
    </location>
</feature>
<feature type="binding site" evidence="1">
    <location>
        <begin position="9"/>
        <end position="11"/>
    </location>
    <ligand>
        <name>substrate</name>
    </ligand>
</feature>
<feature type="binding site" evidence="1">
    <location>
        <position position="173"/>
    </location>
    <ligand>
        <name>substrate</name>
    </ligand>
</feature>
<feature type="binding site" evidence="1">
    <location>
        <position position="212"/>
    </location>
    <ligand>
        <name>substrate</name>
    </ligand>
</feature>
<feature type="binding site" evidence="1">
    <location>
        <begin position="233"/>
        <end position="234"/>
    </location>
    <ligand>
        <name>substrate</name>
    </ligand>
</feature>
<reference key="1">
    <citation type="submission" date="2003-06" db="EMBL/GenBank/DDBJ databases">
        <title>Metabolic engineering of 1,3-propanediol production in Klebsiella pneumoniae.</title>
        <authorList>
            <person name="Zheng P."/>
            <person name="Heuvel J.V."/>
            <person name="Sun J."/>
            <person name="Zeng A."/>
        </authorList>
    </citation>
    <scope>NUCLEOTIDE SEQUENCE [GENOMIC DNA]</scope>
    <source>
        <strain>ATCC 15380 / DSM 2026 / NCTC 418 / NCIMB 418</strain>
    </source>
</reference>
<protein>
    <recommendedName>
        <fullName evidence="1">Triosephosphate isomerase</fullName>
        <shortName evidence="1">TIM</shortName>
        <shortName evidence="1">TPI</shortName>
        <ecNumber evidence="1">5.3.1.1</ecNumber>
    </recommendedName>
    <alternativeName>
        <fullName evidence="1">Triose-phosphate isomerase</fullName>
    </alternativeName>
</protein>
<sequence>MRHPLVMGNWKLNGSRHMVNELVANLRTELAGVSGCAVAIAPPEMYLDLAKRAAEGSHIHLGAQNVDVNLSGAFTGETSAEMLKDIGAQYIIIGHSERRTYHKESDELIAKKFAVLKEQGLTPVLCIGETEAENEAGKTEEVCARQIDAVLKTQGAAVFEGVVIAYEPVWAIGTGKSATPAQAQAVHKFIRDHIAKADAKIAEQVIIQYGGSVNAGNAAELFTQPDIDGALVGGASLKADAFAVIVKAAEAAKKA</sequence>
<gene>
    <name evidence="1" type="primary">tpiA</name>
</gene>
<evidence type="ECO:0000255" key="1">
    <source>
        <dbReference type="HAMAP-Rule" id="MF_00147"/>
    </source>
</evidence>
<organism>
    <name type="scientific">Klebsiella pneumoniae</name>
    <dbReference type="NCBI Taxonomy" id="573"/>
    <lineage>
        <taxon>Bacteria</taxon>
        <taxon>Pseudomonadati</taxon>
        <taxon>Pseudomonadota</taxon>
        <taxon>Gammaproteobacteria</taxon>
        <taxon>Enterobacterales</taxon>
        <taxon>Enterobacteriaceae</taxon>
        <taxon>Klebsiella/Raoultella group</taxon>
        <taxon>Klebsiella</taxon>
        <taxon>Klebsiella pneumoniae complex</taxon>
    </lineage>
</organism>
<dbReference type="EC" id="5.3.1.1" evidence="1"/>
<dbReference type="EMBL" id="AJ567469">
    <property type="protein sequence ID" value="CAD98875.1"/>
    <property type="molecule type" value="Genomic_DNA"/>
</dbReference>
<dbReference type="SMR" id="Q7X222"/>
<dbReference type="UniPathway" id="UPA00109">
    <property type="reaction ID" value="UER00189"/>
</dbReference>
<dbReference type="UniPathway" id="UPA00138"/>
<dbReference type="GO" id="GO:0005829">
    <property type="term" value="C:cytosol"/>
    <property type="evidence" value="ECO:0007669"/>
    <property type="project" value="TreeGrafter"/>
</dbReference>
<dbReference type="GO" id="GO:0004807">
    <property type="term" value="F:triose-phosphate isomerase activity"/>
    <property type="evidence" value="ECO:0007669"/>
    <property type="project" value="UniProtKB-UniRule"/>
</dbReference>
<dbReference type="GO" id="GO:0006094">
    <property type="term" value="P:gluconeogenesis"/>
    <property type="evidence" value="ECO:0007669"/>
    <property type="project" value="UniProtKB-UniRule"/>
</dbReference>
<dbReference type="GO" id="GO:0046166">
    <property type="term" value="P:glyceraldehyde-3-phosphate biosynthetic process"/>
    <property type="evidence" value="ECO:0007669"/>
    <property type="project" value="TreeGrafter"/>
</dbReference>
<dbReference type="GO" id="GO:0019563">
    <property type="term" value="P:glycerol catabolic process"/>
    <property type="evidence" value="ECO:0007669"/>
    <property type="project" value="TreeGrafter"/>
</dbReference>
<dbReference type="GO" id="GO:0006096">
    <property type="term" value="P:glycolytic process"/>
    <property type="evidence" value="ECO:0007669"/>
    <property type="project" value="UniProtKB-UniRule"/>
</dbReference>
<dbReference type="CDD" id="cd00311">
    <property type="entry name" value="TIM"/>
    <property type="match status" value="1"/>
</dbReference>
<dbReference type="FunFam" id="3.20.20.70:FF:000020">
    <property type="entry name" value="Triosephosphate isomerase"/>
    <property type="match status" value="1"/>
</dbReference>
<dbReference type="Gene3D" id="3.20.20.70">
    <property type="entry name" value="Aldolase class I"/>
    <property type="match status" value="1"/>
</dbReference>
<dbReference type="HAMAP" id="MF_00147_B">
    <property type="entry name" value="TIM_B"/>
    <property type="match status" value="1"/>
</dbReference>
<dbReference type="InterPro" id="IPR013785">
    <property type="entry name" value="Aldolase_TIM"/>
</dbReference>
<dbReference type="InterPro" id="IPR035990">
    <property type="entry name" value="TIM_sf"/>
</dbReference>
<dbReference type="InterPro" id="IPR022896">
    <property type="entry name" value="TrioseP_Isoase_bac/euk"/>
</dbReference>
<dbReference type="InterPro" id="IPR000652">
    <property type="entry name" value="Triosephosphate_isomerase"/>
</dbReference>
<dbReference type="InterPro" id="IPR020861">
    <property type="entry name" value="Triosephosphate_isomerase_AS"/>
</dbReference>
<dbReference type="NCBIfam" id="TIGR00419">
    <property type="entry name" value="tim"/>
    <property type="match status" value="1"/>
</dbReference>
<dbReference type="PANTHER" id="PTHR21139">
    <property type="entry name" value="TRIOSEPHOSPHATE ISOMERASE"/>
    <property type="match status" value="1"/>
</dbReference>
<dbReference type="PANTHER" id="PTHR21139:SF42">
    <property type="entry name" value="TRIOSEPHOSPHATE ISOMERASE"/>
    <property type="match status" value="1"/>
</dbReference>
<dbReference type="Pfam" id="PF00121">
    <property type="entry name" value="TIM"/>
    <property type="match status" value="1"/>
</dbReference>
<dbReference type="SUPFAM" id="SSF51351">
    <property type="entry name" value="Triosephosphate isomerase (TIM)"/>
    <property type="match status" value="1"/>
</dbReference>
<dbReference type="PROSITE" id="PS00171">
    <property type="entry name" value="TIM_1"/>
    <property type="match status" value="1"/>
</dbReference>
<dbReference type="PROSITE" id="PS51440">
    <property type="entry name" value="TIM_2"/>
    <property type="match status" value="1"/>
</dbReference>
<comment type="function">
    <text evidence="1">Involved in the gluconeogenesis. Catalyzes stereospecifically the conversion of dihydroxyacetone phosphate (DHAP) to D-glyceraldehyde-3-phosphate (G3P).</text>
</comment>
<comment type="catalytic activity">
    <reaction evidence="1">
        <text>D-glyceraldehyde 3-phosphate = dihydroxyacetone phosphate</text>
        <dbReference type="Rhea" id="RHEA:18585"/>
        <dbReference type="ChEBI" id="CHEBI:57642"/>
        <dbReference type="ChEBI" id="CHEBI:59776"/>
        <dbReference type="EC" id="5.3.1.1"/>
    </reaction>
</comment>
<comment type="pathway">
    <text evidence="1">Carbohydrate biosynthesis; gluconeogenesis.</text>
</comment>
<comment type="pathway">
    <text evidence="1">Carbohydrate degradation; glycolysis; D-glyceraldehyde 3-phosphate from glycerone phosphate: step 1/1.</text>
</comment>
<comment type="subunit">
    <text evidence="1">Homodimer.</text>
</comment>
<comment type="subcellular location">
    <subcellularLocation>
        <location evidence="1">Cytoplasm</location>
    </subcellularLocation>
</comment>
<comment type="similarity">
    <text evidence="1">Belongs to the triosephosphate isomerase family.</text>
</comment>
<name>TPIS_KLEPN</name>
<proteinExistence type="inferred from homology"/>
<accession>Q7X222</accession>